<feature type="peptide" id="PRO_0000011323" description="Glucagon" evidence="2">
    <location>
        <begin position="1"/>
        <end position="29"/>
    </location>
</feature>
<feature type="peptide" id="PRO_0000011324" description="Glucagon-like peptide" evidence="2">
    <location>
        <begin position="45"/>
        <end position="75"/>
    </location>
</feature>
<comment type="function">
    <molecule>Glucagon</molecule>
    <text evidence="1">Plays a key role in glucose metabolism and homeostasis. Regulates blood glucose by increasing gluconeogenesis and decreasing glycolysis.</text>
</comment>
<comment type="subcellular location">
    <subcellularLocation>
        <location>Secreted</location>
    </subcellularLocation>
</comment>
<comment type="similarity">
    <text evidence="3">Belongs to the glucagon family.</text>
</comment>
<comment type="caution">
    <text evidence="3">X's in the sequence were included by homology with other sequences.</text>
</comment>
<evidence type="ECO:0000250" key="1">
    <source>
        <dbReference type="UniProtKB" id="P01275"/>
    </source>
</evidence>
<evidence type="ECO:0000269" key="2">
    <source>
    </source>
</evidence>
<evidence type="ECO:0000305" key="3"/>
<accession>P33528</accession>
<organism>
    <name type="scientific">Amia calva</name>
    <name type="common">Bowfin</name>
    <dbReference type="NCBI Taxonomy" id="7924"/>
    <lineage>
        <taxon>Eukaryota</taxon>
        <taxon>Metazoa</taxon>
        <taxon>Chordata</taxon>
        <taxon>Craniata</taxon>
        <taxon>Vertebrata</taxon>
        <taxon>Euteleostomi</taxon>
        <taxon>Actinopterygii</taxon>
        <taxon>Neopterygii</taxon>
        <taxon>Holostei</taxon>
        <taxon>Amiiformes</taxon>
        <taxon>Amiidae</taxon>
        <taxon>Amia</taxon>
    </lineage>
</organism>
<reference key="1">
    <citation type="journal article" date="1993" name="Biochem. J.">
        <title>Structure and biological activity of glucagon and glucagon-like peptide from a primitive bony fish, the bowfin (Amia calva).</title>
        <authorList>
            <person name="Conlon J.M."/>
            <person name="Youson J.H."/>
            <person name="Mommsen T.P."/>
        </authorList>
    </citation>
    <scope>PROTEIN SEQUENCE</scope>
    <source>
        <tissue>Pancreas</tissue>
    </source>
</reference>
<sequence length="75" mass="8861">HSQGTFTNDYSKYMDTRRAQDFVQWLMSTXXXXXXXXXXXXXXXYADAPYISDVYSYLQDQVAKKWLKSGQDRRE</sequence>
<keyword id="KW-0903">Direct protein sequencing</keyword>
<keyword id="KW-0372">Hormone</keyword>
<keyword id="KW-0964">Secreted</keyword>
<dbReference type="PIR" id="S39018">
    <property type="entry name" value="S39018"/>
</dbReference>
<dbReference type="PIR" id="S39019">
    <property type="entry name" value="S39019"/>
</dbReference>
<dbReference type="GO" id="GO:0005576">
    <property type="term" value="C:extracellular region"/>
    <property type="evidence" value="ECO:0007669"/>
    <property type="project" value="UniProtKB-SubCell"/>
</dbReference>
<dbReference type="GO" id="GO:0005179">
    <property type="term" value="F:hormone activity"/>
    <property type="evidence" value="ECO:0007669"/>
    <property type="project" value="UniProtKB-KW"/>
</dbReference>
<dbReference type="Gene3D" id="6.10.250.590">
    <property type="match status" value="1"/>
</dbReference>
<dbReference type="InterPro" id="IPR015550">
    <property type="entry name" value="Glucagon"/>
</dbReference>
<dbReference type="InterPro" id="IPR000532">
    <property type="entry name" value="Glucagon_GIP_secretin_VIP"/>
</dbReference>
<dbReference type="PANTHER" id="PTHR11418">
    <property type="entry name" value="GLUCAGON"/>
    <property type="match status" value="1"/>
</dbReference>
<dbReference type="PANTHER" id="PTHR11418:SF0">
    <property type="entry name" value="PRO-GLUCAGON"/>
    <property type="match status" value="1"/>
</dbReference>
<dbReference type="Pfam" id="PF00123">
    <property type="entry name" value="Hormone_2"/>
    <property type="match status" value="1"/>
</dbReference>
<dbReference type="PRINTS" id="PR00275">
    <property type="entry name" value="GLUCAGON"/>
</dbReference>
<dbReference type="SMART" id="SM00070">
    <property type="entry name" value="GLUCA"/>
    <property type="match status" value="2"/>
</dbReference>
<dbReference type="PROSITE" id="PS00260">
    <property type="entry name" value="GLUCAGON"/>
    <property type="match status" value="1"/>
</dbReference>
<name>GLUC_AMICA</name>
<protein>
    <recommendedName>
        <fullName>Pro-glucagon</fullName>
    </recommendedName>
    <component>
        <recommendedName>
            <fullName>Glucagon</fullName>
        </recommendedName>
    </component>
    <component>
        <recommendedName>
            <fullName>Glucagon-like peptide</fullName>
        </recommendedName>
    </component>
</protein>
<proteinExistence type="evidence at protein level"/>
<gene>
    <name type="primary">gcg</name>
</gene>